<sequence length="202" mass="22317">MKVLTARQQQVYDLIRDHIAQTGMPPTRAEIAQQLGFRSPNAAEEHLKALARKGVIEIVSGASRGIRLLMEEETGIPLVGRVAAGEPLLAQEHIECRYQVDPAMFKPSADFLLRVSGMSMKNIGIMDGDLLAVHKTEDVRNGQIVVARIDDEVTVKRLKKQGNTVHLLAENEEFAPIVVDLRQQSFSIEGLAVGVIRNSDWS</sequence>
<name>LEXA_PECCC</name>
<protein>
    <recommendedName>
        <fullName evidence="1">LexA repressor</fullName>
        <ecNumber evidence="1">3.4.21.88</ecNumber>
    </recommendedName>
</protein>
<keyword id="KW-0068">Autocatalytic cleavage</keyword>
<keyword id="KW-0227">DNA damage</keyword>
<keyword id="KW-0234">DNA repair</keyword>
<keyword id="KW-0235">DNA replication</keyword>
<keyword id="KW-0238">DNA-binding</keyword>
<keyword id="KW-0378">Hydrolase</keyword>
<keyword id="KW-0678">Repressor</keyword>
<keyword id="KW-0742">SOS response</keyword>
<keyword id="KW-0804">Transcription</keyword>
<keyword id="KW-0805">Transcription regulation</keyword>
<accession>Q04596</accession>
<organism>
    <name type="scientific">Pectobacterium carotovorum subsp. carotovorum</name>
    <name type="common">Erwinia carotovora subsp. carotovora</name>
    <dbReference type="NCBI Taxonomy" id="555"/>
    <lineage>
        <taxon>Bacteria</taxon>
        <taxon>Pseudomonadati</taxon>
        <taxon>Pseudomonadota</taxon>
        <taxon>Gammaproteobacteria</taxon>
        <taxon>Enterobacterales</taxon>
        <taxon>Pectobacteriaceae</taxon>
        <taxon>Pectobacterium</taxon>
    </lineage>
</organism>
<comment type="function">
    <text evidence="1">Represses a number of genes involved in the response to DNA damage (SOS response), including recA and lexA. Binds to the 16 bp palindromic sequence 5'-CTGTATATATATACAG-3'. In the presence of single-stranded DNA, RecA interacts with LexA causing an autocatalytic cleavage which disrupts the DNA-binding part of LexA, leading to derepression of the SOS regulon and eventually DNA repair.</text>
</comment>
<comment type="catalytic activity">
    <reaction evidence="1">
        <text>Hydrolysis of Ala-|-Gly bond in repressor LexA.</text>
        <dbReference type="EC" id="3.4.21.88"/>
    </reaction>
</comment>
<comment type="subunit">
    <text evidence="1">Homodimer.</text>
</comment>
<comment type="similarity">
    <text evidence="1">Belongs to the peptidase S24 family.</text>
</comment>
<evidence type="ECO:0000255" key="1">
    <source>
        <dbReference type="HAMAP-Rule" id="MF_00015"/>
    </source>
</evidence>
<feature type="chain" id="PRO_0000170035" description="LexA repressor">
    <location>
        <begin position="1"/>
        <end position="202"/>
    </location>
</feature>
<feature type="DNA-binding region" description="H-T-H motif" evidence="1">
    <location>
        <begin position="28"/>
        <end position="48"/>
    </location>
</feature>
<feature type="active site" description="For autocatalytic cleavage activity" evidence="1">
    <location>
        <position position="119"/>
    </location>
</feature>
<feature type="active site" description="For autocatalytic cleavage activity" evidence="1">
    <location>
        <position position="156"/>
    </location>
</feature>
<feature type="site" description="Cleavage; by autolysis" evidence="1">
    <location>
        <begin position="84"/>
        <end position="85"/>
    </location>
</feature>
<reference key="1">
    <citation type="journal article" date="1992" name="Mol. Gen. Genet.">
        <title>Nucleotide sequence analysis and comparison of the lexA genes from Salmonella typhimurium, Erwinia carotovora, Pseudomonas aeruginosa and Pseudomonas putida.</title>
        <authorList>
            <person name="Garriga X."/>
            <person name="Calero S."/>
            <person name="Barbe J."/>
        </authorList>
    </citation>
    <scope>NUCLEOTIDE SEQUENCE [GENOMIC DNA]</scope>
    <source>
        <strain>ATCC 15713 / DSM 30168 / BCRC 12851 / CIP 82.83 / NCPPB 312 / LMG 2404 / NRRL B-4072 / 904</strain>
    </source>
</reference>
<proteinExistence type="inferred from homology"/>
<dbReference type="EC" id="3.4.21.88" evidence="1"/>
<dbReference type="EMBL" id="X63189">
    <property type="protein sequence ID" value="CAA44871.1"/>
    <property type="molecule type" value="Genomic_DNA"/>
</dbReference>
<dbReference type="PIR" id="S30163">
    <property type="entry name" value="S30163"/>
</dbReference>
<dbReference type="RefSeq" id="WP_005971310.1">
    <property type="nucleotide sequence ID" value="NZ_VBUA01000005.1"/>
</dbReference>
<dbReference type="SMR" id="Q04596"/>
<dbReference type="MEROPS" id="S24.001"/>
<dbReference type="GeneID" id="93388690"/>
<dbReference type="BRENDA" id="3.4.21.88">
    <property type="organism ID" value="2140"/>
</dbReference>
<dbReference type="GO" id="GO:0003677">
    <property type="term" value="F:DNA binding"/>
    <property type="evidence" value="ECO:0007669"/>
    <property type="project" value="UniProtKB-UniRule"/>
</dbReference>
<dbReference type="GO" id="GO:0004252">
    <property type="term" value="F:serine-type endopeptidase activity"/>
    <property type="evidence" value="ECO:0007669"/>
    <property type="project" value="UniProtKB-UniRule"/>
</dbReference>
<dbReference type="GO" id="GO:0006281">
    <property type="term" value="P:DNA repair"/>
    <property type="evidence" value="ECO:0007669"/>
    <property type="project" value="UniProtKB-UniRule"/>
</dbReference>
<dbReference type="GO" id="GO:0006260">
    <property type="term" value="P:DNA replication"/>
    <property type="evidence" value="ECO:0007669"/>
    <property type="project" value="UniProtKB-UniRule"/>
</dbReference>
<dbReference type="GO" id="GO:0045892">
    <property type="term" value="P:negative regulation of DNA-templated transcription"/>
    <property type="evidence" value="ECO:0007669"/>
    <property type="project" value="UniProtKB-UniRule"/>
</dbReference>
<dbReference type="GO" id="GO:0006508">
    <property type="term" value="P:proteolysis"/>
    <property type="evidence" value="ECO:0007669"/>
    <property type="project" value="InterPro"/>
</dbReference>
<dbReference type="GO" id="GO:0009432">
    <property type="term" value="P:SOS response"/>
    <property type="evidence" value="ECO:0007669"/>
    <property type="project" value="UniProtKB-UniRule"/>
</dbReference>
<dbReference type="CDD" id="cd06529">
    <property type="entry name" value="S24_LexA-like"/>
    <property type="match status" value="1"/>
</dbReference>
<dbReference type="FunFam" id="1.10.10.10:FF:000009">
    <property type="entry name" value="LexA repressor"/>
    <property type="match status" value="1"/>
</dbReference>
<dbReference type="FunFam" id="2.10.109.10:FF:000001">
    <property type="entry name" value="LexA repressor"/>
    <property type="match status" value="1"/>
</dbReference>
<dbReference type="Gene3D" id="2.10.109.10">
    <property type="entry name" value="Umud Fragment, subunit A"/>
    <property type="match status" value="1"/>
</dbReference>
<dbReference type="Gene3D" id="1.10.10.10">
    <property type="entry name" value="Winged helix-like DNA-binding domain superfamily/Winged helix DNA-binding domain"/>
    <property type="match status" value="1"/>
</dbReference>
<dbReference type="HAMAP" id="MF_00015">
    <property type="entry name" value="LexA"/>
    <property type="match status" value="1"/>
</dbReference>
<dbReference type="InterPro" id="IPR006200">
    <property type="entry name" value="LexA"/>
</dbReference>
<dbReference type="InterPro" id="IPR039418">
    <property type="entry name" value="LexA-like"/>
</dbReference>
<dbReference type="InterPro" id="IPR036286">
    <property type="entry name" value="LexA/Signal_pep-like_sf"/>
</dbReference>
<dbReference type="InterPro" id="IPR006199">
    <property type="entry name" value="LexA_DNA-bd_dom"/>
</dbReference>
<dbReference type="InterPro" id="IPR050077">
    <property type="entry name" value="LexA_repressor"/>
</dbReference>
<dbReference type="InterPro" id="IPR006197">
    <property type="entry name" value="Peptidase_S24_LexA"/>
</dbReference>
<dbReference type="InterPro" id="IPR015927">
    <property type="entry name" value="Peptidase_S24_S26A/B/C"/>
</dbReference>
<dbReference type="InterPro" id="IPR036388">
    <property type="entry name" value="WH-like_DNA-bd_sf"/>
</dbReference>
<dbReference type="InterPro" id="IPR036390">
    <property type="entry name" value="WH_DNA-bd_sf"/>
</dbReference>
<dbReference type="NCBIfam" id="TIGR00498">
    <property type="entry name" value="lexA"/>
    <property type="match status" value="1"/>
</dbReference>
<dbReference type="PANTHER" id="PTHR33516">
    <property type="entry name" value="LEXA REPRESSOR"/>
    <property type="match status" value="1"/>
</dbReference>
<dbReference type="PANTHER" id="PTHR33516:SF2">
    <property type="entry name" value="LEXA REPRESSOR-RELATED"/>
    <property type="match status" value="1"/>
</dbReference>
<dbReference type="Pfam" id="PF01726">
    <property type="entry name" value="LexA_DNA_bind"/>
    <property type="match status" value="1"/>
</dbReference>
<dbReference type="Pfam" id="PF00717">
    <property type="entry name" value="Peptidase_S24"/>
    <property type="match status" value="1"/>
</dbReference>
<dbReference type="PRINTS" id="PR00726">
    <property type="entry name" value="LEXASERPTASE"/>
</dbReference>
<dbReference type="SUPFAM" id="SSF51306">
    <property type="entry name" value="LexA/Signal peptidase"/>
    <property type="match status" value="1"/>
</dbReference>
<dbReference type="SUPFAM" id="SSF46785">
    <property type="entry name" value="Winged helix' DNA-binding domain"/>
    <property type="match status" value="1"/>
</dbReference>
<gene>
    <name evidence="1" type="primary">lexA</name>
</gene>